<dbReference type="EMBL" id="AAHF01000005">
    <property type="protein sequence ID" value="EAL89498.1"/>
    <property type="molecule type" value="Genomic_DNA"/>
</dbReference>
<dbReference type="RefSeq" id="XP_751536.1">
    <property type="nucleotide sequence ID" value="XM_746443.1"/>
</dbReference>
<dbReference type="SMR" id="Q4WQI6"/>
<dbReference type="FunCoup" id="Q4WQI6">
    <property type="interactions" value="494"/>
</dbReference>
<dbReference type="STRING" id="330879.Q4WQI6"/>
<dbReference type="EnsemblFungi" id="EAL89498">
    <property type="protein sequence ID" value="EAL89498"/>
    <property type="gene ID" value="AFUA_4G12950"/>
</dbReference>
<dbReference type="GeneID" id="3509156"/>
<dbReference type="KEGG" id="afm:AFUA_4G12950"/>
<dbReference type="VEuPathDB" id="FungiDB:Afu4g12950"/>
<dbReference type="eggNOG" id="KOG2273">
    <property type="taxonomic scope" value="Eukaryota"/>
</dbReference>
<dbReference type="HOGENOM" id="CLU_027221_2_0_1"/>
<dbReference type="InParanoid" id="Q4WQI6"/>
<dbReference type="OMA" id="WSLHRFI"/>
<dbReference type="OrthoDB" id="205639at2759"/>
<dbReference type="Proteomes" id="UP000002530">
    <property type="component" value="Chromosome 4"/>
</dbReference>
<dbReference type="GO" id="GO:0005829">
    <property type="term" value="C:cytosol"/>
    <property type="evidence" value="ECO:0007669"/>
    <property type="project" value="UniProtKB-SubCell"/>
</dbReference>
<dbReference type="GO" id="GO:0005769">
    <property type="term" value="C:early endosome"/>
    <property type="evidence" value="ECO:0000318"/>
    <property type="project" value="GO_Central"/>
</dbReference>
<dbReference type="GO" id="GO:0010008">
    <property type="term" value="C:endosome membrane"/>
    <property type="evidence" value="ECO:0007669"/>
    <property type="project" value="UniProtKB-SubCell"/>
</dbReference>
<dbReference type="GO" id="GO:0000407">
    <property type="term" value="C:phagophore assembly site"/>
    <property type="evidence" value="ECO:0000318"/>
    <property type="project" value="GO_Central"/>
</dbReference>
<dbReference type="GO" id="GO:0034045">
    <property type="term" value="C:phagophore assembly site membrane"/>
    <property type="evidence" value="ECO:0007669"/>
    <property type="project" value="UniProtKB-SubCell"/>
</dbReference>
<dbReference type="GO" id="GO:0035091">
    <property type="term" value="F:phosphatidylinositol binding"/>
    <property type="evidence" value="ECO:0007669"/>
    <property type="project" value="InterPro"/>
</dbReference>
<dbReference type="GO" id="GO:0032456">
    <property type="term" value="P:endocytic recycling"/>
    <property type="evidence" value="ECO:0000318"/>
    <property type="project" value="GO_Central"/>
</dbReference>
<dbReference type="GO" id="GO:0000423">
    <property type="term" value="P:mitophagy"/>
    <property type="evidence" value="ECO:0000318"/>
    <property type="project" value="GO_Central"/>
</dbReference>
<dbReference type="GO" id="GO:0034727">
    <property type="term" value="P:piecemeal microautophagy of the nucleus"/>
    <property type="evidence" value="ECO:0000318"/>
    <property type="project" value="GO_Central"/>
</dbReference>
<dbReference type="GO" id="GO:0015031">
    <property type="term" value="P:protein transport"/>
    <property type="evidence" value="ECO:0000318"/>
    <property type="project" value="GO_Central"/>
</dbReference>
<dbReference type="GO" id="GO:0061709">
    <property type="term" value="P:reticulophagy"/>
    <property type="evidence" value="ECO:0000318"/>
    <property type="project" value="GO_Central"/>
</dbReference>
<dbReference type="CDD" id="cd07628">
    <property type="entry name" value="BAR_Atg24p"/>
    <property type="match status" value="1"/>
</dbReference>
<dbReference type="CDD" id="cd06863">
    <property type="entry name" value="PX_Atg24p"/>
    <property type="match status" value="1"/>
</dbReference>
<dbReference type="FunFam" id="3.30.1520.10:FF:000035">
    <property type="entry name" value="Sorting nexin-4 protein"/>
    <property type="match status" value="1"/>
</dbReference>
<dbReference type="FunFam" id="1.20.1270.60:FF:000042">
    <property type="entry name" value="Vacuolar targeting protein Atg24"/>
    <property type="match status" value="1"/>
</dbReference>
<dbReference type="Gene3D" id="1.20.1270.60">
    <property type="entry name" value="Arfaptin homology (AH) domain/BAR domain"/>
    <property type="match status" value="1"/>
</dbReference>
<dbReference type="Gene3D" id="3.30.1520.10">
    <property type="entry name" value="Phox-like domain"/>
    <property type="match status" value="1"/>
</dbReference>
<dbReference type="InterPro" id="IPR027267">
    <property type="entry name" value="AH/BAR_dom_sf"/>
</dbReference>
<dbReference type="InterPro" id="IPR001683">
    <property type="entry name" value="PX_dom"/>
</dbReference>
<dbReference type="InterPro" id="IPR036871">
    <property type="entry name" value="PX_dom_sf"/>
</dbReference>
<dbReference type="InterPro" id="IPR015404">
    <property type="entry name" value="Vps5_C"/>
</dbReference>
<dbReference type="PANTHER" id="PTHR45949">
    <property type="entry name" value="SORTING NEXIN-4"/>
    <property type="match status" value="1"/>
</dbReference>
<dbReference type="PANTHER" id="PTHR45949:SF2">
    <property type="entry name" value="SORTING NEXIN-4"/>
    <property type="match status" value="1"/>
</dbReference>
<dbReference type="Pfam" id="PF00787">
    <property type="entry name" value="PX"/>
    <property type="match status" value="1"/>
</dbReference>
<dbReference type="Pfam" id="PF09325">
    <property type="entry name" value="Vps5"/>
    <property type="match status" value="2"/>
</dbReference>
<dbReference type="SMART" id="SM00312">
    <property type="entry name" value="PX"/>
    <property type="match status" value="1"/>
</dbReference>
<dbReference type="SUPFAM" id="SSF103657">
    <property type="entry name" value="BAR/IMD domain-like"/>
    <property type="match status" value="1"/>
</dbReference>
<dbReference type="SUPFAM" id="SSF64268">
    <property type="entry name" value="PX domain"/>
    <property type="match status" value="1"/>
</dbReference>
<dbReference type="PROSITE" id="PS50195">
    <property type="entry name" value="PX"/>
    <property type="match status" value="1"/>
</dbReference>
<organism>
    <name type="scientific">Aspergillus fumigatus (strain ATCC MYA-4609 / CBS 101355 / FGSC A1100 / Af293)</name>
    <name type="common">Neosartorya fumigata</name>
    <dbReference type="NCBI Taxonomy" id="330879"/>
    <lineage>
        <taxon>Eukaryota</taxon>
        <taxon>Fungi</taxon>
        <taxon>Dikarya</taxon>
        <taxon>Ascomycota</taxon>
        <taxon>Pezizomycotina</taxon>
        <taxon>Eurotiomycetes</taxon>
        <taxon>Eurotiomycetidae</taxon>
        <taxon>Eurotiales</taxon>
        <taxon>Aspergillaceae</taxon>
        <taxon>Aspergillus</taxon>
        <taxon>Aspergillus subgen. Fumigati</taxon>
    </lineage>
</organism>
<keyword id="KW-0072">Autophagy</keyword>
<keyword id="KW-0175">Coiled coil</keyword>
<keyword id="KW-0963">Cytoplasm</keyword>
<keyword id="KW-0967">Endosome</keyword>
<keyword id="KW-0446">Lipid-binding</keyword>
<keyword id="KW-0472">Membrane</keyword>
<keyword id="KW-0653">Protein transport</keyword>
<keyword id="KW-1185">Reference proteome</keyword>
<keyword id="KW-0813">Transport</keyword>
<sequence>MDQHDDFDSVSWRQDPESDISRPTTSGTDADESLEYNRDTNGKRRMSSVHEDPPQAGPLADAVDLAGIGDGVLECRVDSPLKENDGTKDAYISYLVTTHTDFKSFQKPDFAVRRRFTDFYFLYKTLYREYPACAVPPLPEKHKMEYVTGDRFGPEFTSRRAWSLHRFLKRLTLHPVLRRAPLLAIFLESPDWNAHMRLHSTRTSTGNSDGSGTGIFDNFTDTFVNAFTKVHKPDRRFIEVKEKADKLDEDLNHVEKIVARVARRESDLEADYNDLATQFRKLVPLEPDVEVPLQIFAASVEETARGFKMLKDHTDQNYLGSLRDMEAYIVSVKALLKTREQKQLDFEALVDYRNKAVAERDSLAANPSSYYASNPLTSSPASFIRSKMEDMRGVDHEQSRRERVRKLELRIDELTREVESAKTTSEMFDEEVVREVADFERIKAVEFRDTLGALAEKHIDFFQGAINTWERFVAEMEGDLDNDPEMSEHGRGGGVAA</sequence>
<comment type="function">
    <text evidence="1">Sorting nexin, involved in the separation or division of vacuoles throughout the entire life cycle of the cells. Involved in retrieval of late-Golgi SNAREs from post-Golgi endosomes to the trans-Golgi network, for cytoplasm to vacuole transport (Cvt), and autophagy of large cargos including mitophagy, pexophagy and glycophagy.</text>
</comment>
<comment type="subcellular location">
    <subcellularLocation>
        <location evidence="1">Cytoplasm</location>
        <location evidence="1">Cytosol</location>
    </subcellularLocation>
    <subcellularLocation>
        <location evidence="1">Preautophagosomal structure membrane</location>
        <topology evidence="1">Peripheral membrane protein</topology>
    </subcellularLocation>
    <subcellularLocation>
        <location evidence="1">Endosome membrane</location>
        <topology evidence="1">Peripheral membrane protein</topology>
    </subcellularLocation>
    <text evidence="1">Endosome and other perivacuolar punctate structures. Associates to phosphatidylinositol 3-phosphate, necessary for peripheral membrane localization to the perivacuolar punctate structures.</text>
</comment>
<comment type="domain">
    <text evidence="4">The PX domain binds phosphatidylinositol 3-phosphate which is necessary for peripheral membrane localization to the perivacuolar punctate structures.</text>
</comment>
<comment type="similarity">
    <text evidence="8">Belongs to the sorting nexin family.</text>
</comment>
<evidence type="ECO:0000250" key="1">
    <source>
        <dbReference type="UniProtKB" id="P47057"/>
    </source>
</evidence>
<evidence type="ECO:0000250" key="2">
    <source>
        <dbReference type="UniProtKB" id="Q3UR97"/>
    </source>
</evidence>
<evidence type="ECO:0000250" key="3">
    <source>
        <dbReference type="UniProtKB" id="Q6P4T1"/>
    </source>
</evidence>
<evidence type="ECO:0000250" key="4">
    <source>
        <dbReference type="UniProtKB" id="Q96L94"/>
    </source>
</evidence>
<evidence type="ECO:0000255" key="5"/>
<evidence type="ECO:0000255" key="6">
    <source>
        <dbReference type="PROSITE-ProRule" id="PRU00147"/>
    </source>
</evidence>
<evidence type="ECO:0000256" key="7">
    <source>
        <dbReference type="SAM" id="MobiDB-lite"/>
    </source>
</evidence>
<evidence type="ECO:0000305" key="8"/>
<proteinExistence type="inferred from homology"/>
<protein>
    <recommendedName>
        <fullName>Sorting nexin-4</fullName>
    </recommendedName>
    <alternativeName>
        <fullName>Autophagy-related protein 24</fullName>
    </alternativeName>
</protein>
<reference key="1">
    <citation type="journal article" date="2005" name="Nature">
        <title>Genomic sequence of the pathogenic and allergenic filamentous fungus Aspergillus fumigatus.</title>
        <authorList>
            <person name="Nierman W.C."/>
            <person name="Pain A."/>
            <person name="Anderson M.J."/>
            <person name="Wortman J.R."/>
            <person name="Kim H.S."/>
            <person name="Arroyo J."/>
            <person name="Berriman M."/>
            <person name="Abe K."/>
            <person name="Archer D.B."/>
            <person name="Bermejo C."/>
            <person name="Bennett J.W."/>
            <person name="Bowyer P."/>
            <person name="Chen D."/>
            <person name="Collins M."/>
            <person name="Coulsen R."/>
            <person name="Davies R."/>
            <person name="Dyer P.S."/>
            <person name="Farman M.L."/>
            <person name="Fedorova N."/>
            <person name="Fedorova N.D."/>
            <person name="Feldblyum T.V."/>
            <person name="Fischer R."/>
            <person name="Fosker N."/>
            <person name="Fraser A."/>
            <person name="Garcia J.L."/>
            <person name="Garcia M.J."/>
            <person name="Goble A."/>
            <person name="Goldman G.H."/>
            <person name="Gomi K."/>
            <person name="Griffith-Jones S."/>
            <person name="Gwilliam R."/>
            <person name="Haas B.J."/>
            <person name="Haas H."/>
            <person name="Harris D.E."/>
            <person name="Horiuchi H."/>
            <person name="Huang J."/>
            <person name="Humphray S."/>
            <person name="Jimenez J."/>
            <person name="Keller N."/>
            <person name="Khouri H."/>
            <person name="Kitamoto K."/>
            <person name="Kobayashi T."/>
            <person name="Konzack S."/>
            <person name="Kulkarni R."/>
            <person name="Kumagai T."/>
            <person name="Lafton A."/>
            <person name="Latge J.-P."/>
            <person name="Li W."/>
            <person name="Lord A."/>
            <person name="Lu C."/>
            <person name="Majoros W.H."/>
            <person name="May G.S."/>
            <person name="Miller B.L."/>
            <person name="Mohamoud Y."/>
            <person name="Molina M."/>
            <person name="Monod M."/>
            <person name="Mouyna I."/>
            <person name="Mulligan S."/>
            <person name="Murphy L.D."/>
            <person name="O'Neil S."/>
            <person name="Paulsen I."/>
            <person name="Penalva M.A."/>
            <person name="Pertea M."/>
            <person name="Price C."/>
            <person name="Pritchard B.L."/>
            <person name="Quail M.A."/>
            <person name="Rabbinowitsch E."/>
            <person name="Rawlins N."/>
            <person name="Rajandream M.A."/>
            <person name="Reichard U."/>
            <person name="Renauld H."/>
            <person name="Robson G.D."/>
            <person name="Rodriguez de Cordoba S."/>
            <person name="Rodriguez-Pena J.M."/>
            <person name="Ronning C.M."/>
            <person name="Rutter S."/>
            <person name="Salzberg S.L."/>
            <person name="Sanchez M."/>
            <person name="Sanchez-Ferrero J.C."/>
            <person name="Saunders D."/>
            <person name="Seeger K."/>
            <person name="Squares R."/>
            <person name="Squares S."/>
            <person name="Takeuchi M."/>
            <person name="Tekaia F."/>
            <person name="Turner G."/>
            <person name="Vazquez de Aldana C.R."/>
            <person name="Weidman J."/>
            <person name="White O."/>
            <person name="Woodward J.R."/>
            <person name="Yu J.-H."/>
            <person name="Fraser C.M."/>
            <person name="Galagan J.E."/>
            <person name="Asai K."/>
            <person name="Machida M."/>
            <person name="Hall N."/>
            <person name="Barrell B.G."/>
            <person name="Denning D.W."/>
        </authorList>
    </citation>
    <scope>NUCLEOTIDE SEQUENCE [LARGE SCALE GENOMIC DNA]</scope>
    <source>
        <strain>ATCC MYA-4609 / CBS 101355 / FGSC A1100 / Af293</strain>
    </source>
</reference>
<feature type="chain" id="PRO_0000213807" description="Sorting nexin-4">
    <location>
        <begin position="1"/>
        <end position="497"/>
    </location>
</feature>
<feature type="domain" description="PX" evidence="6">
    <location>
        <begin position="72"/>
        <end position="194"/>
    </location>
</feature>
<feature type="region of interest" description="Disordered" evidence="7">
    <location>
        <begin position="1"/>
        <end position="59"/>
    </location>
</feature>
<feature type="coiled-coil region" evidence="5">
    <location>
        <begin position="235"/>
        <end position="261"/>
    </location>
</feature>
<feature type="coiled-coil region" evidence="5">
    <location>
        <begin position="397"/>
        <end position="432"/>
    </location>
</feature>
<feature type="compositionally biased region" description="Basic and acidic residues" evidence="7">
    <location>
        <begin position="35"/>
        <end position="53"/>
    </location>
</feature>
<feature type="binding site" evidence="2">
    <location>
        <position position="115"/>
    </location>
    <ligand>
        <name>a 1,2-diacyl-sn-glycero-3-phospho-(1D-myo-inositol-3-phosphate)</name>
        <dbReference type="ChEBI" id="CHEBI:58088"/>
    </ligand>
</feature>
<feature type="binding site" evidence="2">
    <location>
        <position position="117"/>
    </location>
    <ligand>
        <name>a 1,2-diacyl-sn-glycero-3-phospho-(1D-myo-inositol-3-phosphate)</name>
        <dbReference type="ChEBI" id="CHEBI:58088"/>
    </ligand>
</feature>
<feature type="binding site" evidence="4">
    <location>
        <position position="141"/>
    </location>
    <ligand>
        <name>a 1,2-diacyl-sn-glycero-3-phospho-(1D-myo-inositol-3-phosphate)</name>
        <dbReference type="ChEBI" id="CHEBI:58088"/>
    </ligand>
</feature>
<feature type="binding site" evidence="3">
    <location>
        <position position="160"/>
    </location>
    <ligand>
        <name>a 1,2-diacyl-sn-glycero-3-phospho-(1D-myo-inositol-3-phosphate)</name>
        <dbReference type="ChEBI" id="CHEBI:58088"/>
    </ligand>
</feature>
<name>SNX4_ASPFU</name>
<gene>
    <name type="primary">snx4</name>
    <name type="synonym">atg24</name>
    <name type="ORF">AFUA_4G12950</name>
</gene>
<accession>Q4WQI6</accession>